<sequence length="242" mass="26570">MTTVSMRDMLQAGVHFGHQTRYWNPKMKPFIFGARNGVHIINLEHTVPMFNEALAFISNVASKKGKVLFVGTKRAAGEAIKESALSCDQFYVDHRWLGGMLTNWKTVRQSIKRLKELESQSVDGTFDKLTKKEALMRTRELEKLEKSLGGIKNMGGLPDVLFVIGADHEHIAIKEANNLGIPVVAVVDTNSAPDGVNYIVPGNDDAMRAIRLYTSSVAAAAKAGRGQDLAVQAEQDGFVEAE</sequence>
<protein>
    <recommendedName>
        <fullName evidence="1">Small ribosomal subunit protein uS2</fullName>
    </recommendedName>
    <alternativeName>
        <fullName evidence="2">30S ribosomal protein S2</fullName>
    </alternativeName>
</protein>
<feature type="chain" id="PRO_1000194344" description="Small ribosomal subunit protein uS2">
    <location>
        <begin position="1"/>
        <end position="242"/>
    </location>
</feature>
<keyword id="KW-0687">Ribonucleoprotein</keyword>
<keyword id="KW-0689">Ribosomal protein</keyword>
<dbReference type="EMBL" id="CP001252">
    <property type="protein sequence ID" value="ACK47388.1"/>
    <property type="molecule type" value="Genomic_DNA"/>
</dbReference>
<dbReference type="RefSeq" id="WP_006080979.1">
    <property type="nucleotide sequence ID" value="NC_011663.1"/>
</dbReference>
<dbReference type="SMR" id="B8E7R6"/>
<dbReference type="GeneID" id="11771730"/>
<dbReference type="KEGG" id="sbp:Sbal223_2902"/>
<dbReference type="HOGENOM" id="CLU_040318_1_2_6"/>
<dbReference type="Proteomes" id="UP000002507">
    <property type="component" value="Chromosome"/>
</dbReference>
<dbReference type="GO" id="GO:0022627">
    <property type="term" value="C:cytosolic small ribosomal subunit"/>
    <property type="evidence" value="ECO:0007669"/>
    <property type="project" value="TreeGrafter"/>
</dbReference>
<dbReference type="GO" id="GO:0003735">
    <property type="term" value="F:structural constituent of ribosome"/>
    <property type="evidence" value="ECO:0007669"/>
    <property type="project" value="InterPro"/>
</dbReference>
<dbReference type="GO" id="GO:0006412">
    <property type="term" value="P:translation"/>
    <property type="evidence" value="ECO:0007669"/>
    <property type="project" value="UniProtKB-UniRule"/>
</dbReference>
<dbReference type="CDD" id="cd01425">
    <property type="entry name" value="RPS2"/>
    <property type="match status" value="1"/>
</dbReference>
<dbReference type="FunFam" id="1.10.287.610:FF:000001">
    <property type="entry name" value="30S ribosomal protein S2"/>
    <property type="match status" value="1"/>
</dbReference>
<dbReference type="Gene3D" id="3.40.50.10490">
    <property type="entry name" value="Glucose-6-phosphate isomerase like protein, domain 1"/>
    <property type="match status" value="1"/>
</dbReference>
<dbReference type="Gene3D" id="1.10.287.610">
    <property type="entry name" value="Helix hairpin bin"/>
    <property type="match status" value="1"/>
</dbReference>
<dbReference type="HAMAP" id="MF_00291_B">
    <property type="entry name" value="Ribosomal_uS2_B"/>
    <property type="match status" value="1"/>
</dbReference>
<dbReference type="InterPro" id="IPR001865">
    <property type="entry name" value="Ribosomal_uS2"/>
</dbReference>
<dbReference type="InterPro" id="IPR005706">
    <property type="entry name" value="Ribosomal_uS2_bac/mit/plastid"/>
</dbReference>
<dbReference type="InterPro" id="IPR018130">
    <property type="entry name" value="Ribosomal_uS2_CS"/>
</dbReference>
<dbReference type="InterPro" id="IPR023591">
    <property type="entry name" value="Ribosomal_uS2_flav_dom_sf"/>
</dbReference>
<dbReference type="NCBIfam" id="TIGR01011">
    <property type="entry name" value="rpsB_bact"/>
    <property type="match status" value="1"/>
</dbReference>
<dbReference type="PANTHER" id="PTHR12534">
    <property type="entry name" value="30S RIBOSOMAL PROTEIN S2 PROKARYOTIC AND ORGANELLAR"/>
    <property type="match status" value="1"/>
</dbReference>
<dbReference type="PANTHER" id="PTHR12534:SF0">
    <property type="entry name" value="SMALL RIBOSOMAL SUBUNIT PROTEIN US2M"/>
    <property type="match status" value="1"/>
</dbReference>
<dbReference type="Pfam" id="PF00318">
    <property type="entry name" value="Ribosomal_S2"/>
    <property type="match status" value="1"/>
</dbReference>
<dbReference type="PRINTS" id="PR00395">
    <property type="entry name" value="RIBOSOMALS2"/>
</dbReference>
<dbReference type="SUPFAM" id="SSF52313">
    <property type="entry name" value="Ribosomal protein S2"/>
    <property type="match status" value="1"/>
</dbReference>
<dbReference type="PROSITE" id="PS00962">
    <property type="entry name" value="RIBOSOMAL_S2_1"/>
    <property type="match status" value="1"/>
</dbReference>
<dbReference type="PROSITE" id="PS00963">
    <property type="entry name" value="RIBOSOMAL_S2_2"/>
    <property type="match status" value="1"/>
</dbReference>
<evidence type="ECO:0000255" key="1">
    <source>
        <dbReference type="HAMAP-Rule" id="MF_00291"/>
    </source>
</evidence>
<evidence type="ECO:0000305" key="2"/>
<accession>B8E7R6</accession>
<organism>
    <name type="scientific">Shewanella baltica (strain OS223)</name>
    <dbReference type="NCBI Taxonomy" id="407976"/>
    <lineage>
        <taxon>Bacteria</taxon>
        <taxon>Pseudomonadati</taxon>
        <taxon>Pseudomonadota</taxon>
        <taxon>Gammaproteobacteria</taxon>
        <taxon>Alteromonadales</taxon>
        <taxon>Shewanellaceae</taxon>
        <taxon>Shewanella</taxon>
    </lineage>
</organism>
<comment type="similarity">
    <text evidence="1">Belongs to the universal ribosomal protein uS2 family.</text>
</comment>
<reference key="1">
    <citation type="submission" date="2008-12" db="EMBL/GenBank/DDBJ databases">
        <title>Complete sequence of chromosome of Shewanella baltica OS223.</title>
        <authorList>
            <consortium name="US DOE Joint Genome Institute"/>
            <person name="Lucas S."/>
            <person name="Copeland A."/>
            <person name="Lapidus A."/>
            <person name="Glavina del Rio T."/>
            <person name="Dalin E."/>
            <person name="Tice H."/>
            <person name="Bruce D."/>
            <person name="Goodwin L."/>
            <person name="Pitluck S."/>
            <person name="Chertkov O."/>
            <person name="Meincke L."/>
            <person name="Brettin T."/>
            <person name="Detter J.C."/>
            <person name="Han C."/>
            <person name="Kuske C.R."/>
            <person name="Larimer F."/>
            <person name="Land M."/>
            <person name="Hauser L."/>
            <person name="Kyrpides N."/>
            <person name="Ovchinnikova G."/>
            <person name="Brettar I."/>
            <person name="Rodrigues J."/>
            <person name="Konstantinidis K."/>
            <person name="Tiedje J."/>
        </authorList>
    </citation>
    <scope>NUCLEOTIDE SEQUENCE [LARGE SCALE GENOMIC DNA]</scope>
    <source>
        <strain>OS223</strain>
    </source>
</reference>
<proteinExistence type="inferred from homology"/>
<name>RS2_SHEB2</name>
<gene>
    <name evidence="1" type="primary">rpsB</name>
    <name type="ordered locus">Sbal223_2902</name>
</gene>